<sequence>MPPELLRDVLMRIERSEDTWPSRKNVVSCVGVCKNWRQIFKEIVNVPEVSSKFTFPISLKQPGPGGSLVQCYVKRNRSNQTFYLYLGGEAKIFCQSEPSEPNKSIWKLSLKPGGTATTQTELDNFVSFRSPSGQKEGVLVLKSKVPRLEEQSWCLDFNGWRDIVSSGKKFQLVALLRTNLRMKTTFSSLRKSETCTNSSYEAEWIPLVRTSVFAVIARVCRDKKHTPSYELKLALYFAKNSAILKKFVLRGYTREEDLLALPVAN</sequence>
<accession>O80699</accession>
<accession>F4HX24</accession>
<comment type="similarity">
    <text evidence="4">Belongs to the TUB family.</text>
</comment>
<comment type="sequence caution" evidence="4">
    <conflict type="erroneous gene model prediction">
        <sequence resource="EMBL-CDS" id="AEE33905"/>
    </conflict>
</comment>
<proteinExistence type="inferred from homology"/>
<protein>
    <recommendedName>
        <fullName evidence="3">Putative Tubby-like protein 4</fullName>
        <shortName evidence="3">AtTLP4</shortName>
    </recommendedName>
</protein>
<keyword id="KW-1185">Reference proteome</keyword>
<gene>
    <name evidence="4" type="primary">TULP4</name>
    <name evidence="3" type="synonym">TLP4</name>
    <name evidence="5" type="ordered locus">At1g61940</name>
    <name evidence="6" type="ORF">F8K4.13</name>
</gene>
<reference key="1">
    <citation type="journal article" date="2000" name="Nature">
        <title>Sequence and analysis of chromosome 1 of the plant Arabidopsis thaliana.</title>
        <authorList>
            <person name="Theologis A."/>
            <person name="Ecker J.R."/>
            <person name="Palm C.J."/>
            <person name="Federspiel N.A."/>
            <person name="Kaul S."/>
            <person name="White O."/>
            <person name="Alonso J."/>
            <person name="Altafi H."/>
            <person name="Araujo R."/>
            <person name="Bowman C.L."/>
            <person name="Brooks S.Y."/>
            <person name="Buehler E."/>
            <person name="Chan A."/>
            <person name="Chao Q."/>
            <person name="Chen H."/>
            <person name="Cheuk R.F."/>
            <person name="Chin C.W."/>
            <person name="Chung M.K."/>
            <person name="Conn L."/>
            <person name="Conway A.B."/>
            <person name="Conway A.R."/>
            <person name="Creasy T.H."/>
            <person name="Dewar K."/>
            <person name="Dunn P."/>
            <person name="Etgu P."/>
            <person name="Feldblyum T.V."/>
            <person name="Feng J.-D."/>
            <person name="Fong B."/>
            <person name="Fujii C.Y."/>
            <person name="Gill J.E."/>
            <person name="Goldsmith A.D."/>
            <person name="Haas B."/>
            <person name="Hansen N.F."/>
            <person name="Hughes B."/>
            <person name="Huizar L."/>
            <person name="Hunter J.L."/>
            <person name="Jenkins J."/>
            <person name="Johnson-Hopson C."/>
            <person name="Khan S."/>
            <person name="Khaykin E."/>
            <person name="Kim C.J."/>
            <person name="Koo H.L."/>
            <person name="Kremenetskaia I."/>
            <person name="Kurtz D.B."/>
            <person name="Kwan A."/>
            <person name="Lam B."/>
            <person name="Langin-Hooper S."/>
            <person name="Lee A."/>
            <person name="Lee J.M."/>
            <person name="Lenz C.A."/>
            <person name="Li J.H."/>
            <person name="Li Y.-P."/>
            <person name="Lin X."/>
            <person name="Liu S.X."/>
            <person name="Liu Z.A."/>
            <person name="Luros J.S."/>
            <person name="Maiti R."/>
            <person name="Marziali A."/>
            <person name="Militscher J."/>
            <person name="Miranda M."/>
            <person name="Nguyen M."/>
            <person name="Nierman W.C."/>
            <person name="Osborne B.I."/>
            <person name="Pai G."/>
            <person name="Peterson J."/>
            <person name="Pham P.K."/>
            <person name="Rizzo M."/>
            <person name="Rooney T."/>
            <person name="Rowley D."/>
            <person name="Sakano H."/>
            <person name="Salzberg S.L."/>
            <person name="Schwartz J.R."/>
            <person name="Shinn P."/>
            <person name="Southwick A.M."/>
            <person name="Sun H."/>
            <person name="Tallon L.J."/>
            <person name="Tambunga G."/>
            <person name="Toriumi M.J."/>
            <person name="Town C.D."/>
            <person name="Utterback T."/>
            <person name="Van Aken S."/>
            <person name="Vaysberg M."/>
            <person name="Vysotskaia V.S."/>
            <person name="Walker M."/>
            <person name="Wu D."/>
            <person name="Yu G."/>
            <person name="Fraser C.M."/>
            <person name="Venter J.C."/>
            <person name="Davis R.W."/>
        </authorList>
    </citation>
    <scope>NUCLEOTIDE SEQUENCE [LARGE SCALE GENOMIC DNA]</scope>
    <source>
        <strain>cv. Columbia</strain>
    </source>
</reference>
<reference key="2">
    <citation type="journal article" date="2017" name="Plant J.">
        <title>Araport11: a complete reannotation of the Arabidopsis thaliana reference genome.</title>
        <authorList>
            <person name="Cheng C.Y."/>
            <person name="Krishnakumar V."/>
            <person name="Chan A.P."/>
            <person name="Thibaud-Nissen F."/>
            <person name="Schobel S."/>
            <person name="Town C.D."/>
        </authorList>
    </citation>
    <scope>GENOME REANNOTATION</scope>
    <source>
        <strain>cv. Columbia</strain>
    </source>
</reference>
<reference key="3">
    <citation type="journal article" date="2004" name="Plant Physiol.">
        <title>Molecular analyses of the Arabidopsis TUBBY-like protein gene family.</title>
        <authorList>
            <person name="Lai C.-P."/>
            <person name="Lee C.-L."/>
            <person name="Chen P.-H."/>
            <person name="Wu S.-H."/>
            <person name="Yang C.-C."/>
            <person name="Shaw J.-F."/>
        </authorList>
    </citation>
    <scope>GENE FAMILY</scope>
    <scope>NOMENCLATURE</scope>
</reference>
<name>TLP4_ARATH</name>
<evidence type="ECO:0000255" key="1"/>
<evidence type="ECO:0000255" key="2">
    <source>
        <dbReference type="PROSITE-ProRule" id="PRU00080"/>
    </source>
</evidence>
<evidence type="ECO:0000303" key="3">
    <source>
    </source>
</evidence>
<evidence type="ECO:0000305" key="4"/>
<evidence type="ECO:0000312" key="5">
    <source>
        <dbReference type="Araport" id="AT1G61940"/>
    </source>
</evidence>
<evidence type="ECO:0000312" key="6">
    <source>
        <dbReference type="EMBL" id="AAC28518.1"/>
    </source>
</evidence>
<dbReference type="EMBL" id="AC004392">
    <property type="protein sequence ID" value="AAC28518.1"/>
    <property type="molecule type" value="Genomic_DNA"/>
</dbReference>
<dbReference type="EMBL" id="CP002684">
    <property type="protein sequence ID" value="AEE33905.1"/>
    <property type="status" value="ALT_SEQ"/>
    <property type="molecule type" value="Genomic_DNA"/>
</dbReference>
<dbReference type="EMBL" id="CP002684">
    <property type="protein sequence ID" value="ANM58625.1"/>
    <property type="molecule type" value="Genomic_DNA"/>
</dbReference>
<dbReference type="PIR" id="T02138">
    <property type="entry name" value="T02138"/>
</dbReference>
<dbReference type="RefSeq" id="NP_001321047.1">
    <property type="nucleotide sequence ID" value="NM_001334008.1"/>
</dbReference>
<dbReference type="RefSeq" id="NP_176385.2">
    <property type="nucleotide sequence ID" value="NM_104874.3"/>
</dbReference>
<dbReference type="STRING" id="3702.O80699"/>
<dbReference type="EnsemblPlants" id="AT1G61940.2">
    <property type="protein sequence ID" value="AT1G61940.2"/>
    <property type="gene ID" value="AT1G61940"/>
</dbReference>
<dbReference type="GeneID" id="842489"/>
<dbReference type="Gramene" id="AT1G61940.2">
    <property type="protein sequence ID" value="AT1G61940.2"/>
    <property type="gene ID" value="AT1G61940"/>
</dbReference>
<dbReference type="KEGG" id="ath:AT1G61940"/>
<dbReference type="Araport" id="AT1G61940"/>
<dbReference type="TAIR" id="AT1G61940">
    <property type="gene designation" value="TLP4"/>
</dbReference>
<dbReference type="InParanoid" id="O80699"/>
<dbReference type="PRO" id="PR:O80699"/>
<dbReference type="Proteomes" id="UP000006548">
    <property type="component" value="Chromosome 1"/>
</dbReference>
<dbReference type="ExpressionAtlas" id="O80699">
    <property type="expression patterns" value="baseline and differential"/>
</dbReference>
<dbReference type="GO" id="GO:0003700">
    <property type="term" value="F:DNA-binding transcription factor activity"/>
    <property type="evidence" value="ECO:0000250"/>
    <property type="project" value="TAIR"/>
</dbReference>
<dbReference type="GO" id="GO:0006355">
    <property type="term" value="P:regulation of DNA-templated transcription"/>
    <property type="evidence" value="ECO:0000304"/>
    <property type="project" value="TAIR"/>
</dbReference>
<dbReference type="Gene3D" id="3.20.90.10">
    <property type="entry name" value="Tubby Protein, Chain A"/>
    <property type="match status" value="1"/>
</dbReference>
<dbReference type="InterPro" id="IPR025659">
    <property type="entry name" value="Tubby-like_C"/>
</dbReference>
<dbReference type="InterPro" id="IPR000007">
    <property type="entry name" value="Tubby_C"/>
</dbReference>
<dbReference type="PANTHER" id="PTHR16517:SF119">
    <property type="entry name" value="TUBBY-LIKE F-BOX PROTEIN 3"/>
    <property type="match status" value="1"/>
</dbReference>
<dbReference type="PANTHER" id="PTHR16517">
    <property type="entry name" value="TUBBY-RELATED"/>
    <property type="match status" value="1"/>
</dbReference>
<dbReference type="Pfam" id="PF01167">
    <property type="entry name" value="Tub"/>
    <property type="match status" value="1"/>
</dbReference>
<dbReference type="SUPFAM" id="SSF54518">
    <property type="entry name" value="Tubby C-terminal domain-like"/>
    <property type="match status" value="1"/>
</dbReference>
<organism>
    <name type="scientific">Arabidopsis thaliana</name>
    <name type="common">Mouse-ear cress</name>
    <dbReference type="NCBI Taxonomy" id="3702"/>
    <lineage>
        <taxon>Eukaryota</taxon>
        <taxon>Viridiplantae</taxon>
        <taxon>Streptophyta</taxon>
        <taxon>Embryophyta</taxon>
        <taxon>Tracheophyta</taxon>
        <taxon>Spermatophyta</taxon>
        <taxon>Magnoliopsida</taxon>
        <taxon>eudicotyledons</taxon>
        <taxon>Gunneridae</taxon>
        <taxon>Pentapetalae</taxon>
        <taxon>rosids</taxon>
        <taxon>malvids</taxon>
        <taxon>Brassicales</taxon>
        <taxon>Brassicaceae</taxon>
        <taxon>Camelineae</taxon>
        <taxon>Arabidopsis</taxon>
    </lineage>
</organism>
<feature type="chain" id="PRO_0000272232" description="Putative Tubby-like protein 4">
    <location>
        <begin position="1"/>
        <end position="265"/>
    </location>
</feature>
<feature type="domain" description="F-box" evidence="2">
    <location>
        <begin position="1"/>
        <end position="44"/>
    </location>
</feature>
<feature type="domain" description="FBD" evidence="1">
    <location>
        <begin position="228"/>
        <end position="250"/>
    </location>
</feature>